<organism>
    <name type="scientific">Koribacter versatilis (strain Ellin345)</name>
    <dbReference type="NCBI Taxonomy" id="204669"/>
    <lineage>
        <taxon>Bacteria</taxon>
        <taxon>Pseudomonadati</taxon>
        <taxon>Acidobacteriota</taxon>
        <taxon>Terriglobia</taxon>
        <taxon>Terriglobales</taxon>
        <taxon>Candidatus Korobacteraceae</taxon>
        <taxon>Candidatus Korobacter</taxon>
    </lineage>
</organism>
<accession>Q1IU82</accession>
<comment type="similarity">
    <text evidence="1">Belongs to the universal ribosomal protein uS2 family.</text>
</comment>
<dbReference type="EMBL" id="CP000360">
    <property type="protein sequence ID" value="ABF39568.1"/>
    <property type="molecule type" value="Genomic_DNA"/>
</dbReference>
<dbReference type="RefSeq" id="WP_011521370.1">
    <property type="nucleotide sequence ID" value="NC_008009.1"/>
</dbReference>
<dbReference type="SMR" id="Q1IU82"/>
<dbReference type="STRING" id="204669.Acid345_0563"/>
<dbReference type="EnsemblBacteria" id="ABF39568">
    <property type="protein sequence ID" value="ABF39568"/>
    <property type="gene ID" value="Acid345_0563"/>
</dbReference>
<dbReference type="KEGG" id="aba:Acid345_0563"/>
<dbReference type="eggNOG" id="COG0052">
    <property type="taxonomic scope" value="Bacteria"/>
</dbReference>
<dbReference type="HOGENOM" id="CLU_040318_2_3_0"/>
<dbReference type="OrthoDB" id="9808036at2"/>
<dbReference type="Proteomes" id="UP000002432">
    <property type="component" value="Chromosome"/>
</dbReference>
<dbReference type="GO" id="GO:0022627">
    <property type="term" value="C:cytosolic small ribosomal subunit"/>
    <property type="evidence" value="ECO:0007669"/>
    <property type="project" value="TreeGrafter"/>
</dbReference>
<dbReference type="GO" id="GO:0003735">
    <property type="term" value="F:structural constituent of ribosome"/>
    <property type="evidence" value="ECO:0007669"/>
    <property type="project" value="InterPro"/>
</dbReference>
<dbReference type="GO" id="GO:0006412">
    <property type="term" value="P:translation"/>
    <property type="evidence" value="ECO:0007669"/>
    <property type="project" value="UniProtKB-UniRule"/>
</dbReference>
<dbReference type="CDD" id="cd01425">
    <property type="entry name" value="RPS2"/>
    <property type="match status" value="1"/>
</dbReference>
<dbReference type="FunFam" id="1.10.287.610:FF:000001">
    <property type="entry name" value="30S ribosomal protein S2"/>
    <property type="match status" value="1"/>
</dbReference>
<dbReference type="Gene3D" id="3.40.50.10490">
    <property type="entry name" value="Glucose-6-phosphate isomerase like protein, domain 1"/>
    <property type="match status" value="1"/>
</dbReference>
<dbReference type="Gene3D" id="1.10.287.610">
    <property type="entry name" value="Helix hairpin bin"/>
    <property type="match status" value="1"/>
</dbReference>
<dbReference type="HAMAP" id="MF_00291_B">
    <property type="entry name" value="Ribosomal_uS2_B"/>
    <property type="match status" value="1"/>
</dbReference>
<dbReference type="InterPro" id="IPR001865">
    <property type="entry name" value="Ribosomal_uS2"/>
</dbReference>
<dbReference type="InterPro" id="IPR005706">
    <property type="entry name" value="Ribosomal_uS2_bac/mit/plastid"/>
</dbReference>
<dbReference type="InterPro" id="IPR018130">
    <property type="entry name" value="Ribosomal_uS2_CS"/>
</dbReference>
<dbReference type="InterPro" id="IPR023591">
    <property type="entry name" value="Ribosomal_uS2_flav_dom_sf"/>
</dbReference>
<dbReference type="NCBIfam" id="TIGR01011">
    <property type="entry name" value="rpsB_bact"/>
    <property type="match status" value="1"/>
</dbReference>
<dbReference type="PANTHER" id="PTHR12534">
    <property type="entry name" value="30S RIBOSOMAL PROTEIN S2 PROKARYOTIC AND ORGANELLAR"/>
    <property type="match status" value="1"/>
</dbReference>
<dbReference type="PANTHER" id="PTHR12534:SF0">
    <property type="entry name" value="SMALL RIBOSOMAL SUBUNIT PROTEIN US2M"/>
    <property type="match status" value="1"/>
</dbReference>
<dbReference type="Pfam" id="PF00318">
    <property type="entry name" value="Ribosomal_S2"/>
    <property type="match status" value="1"/>
</dbReference>
<dbReference type="PRINTS" id="PR00395">
    <property type="entry name" value="RIBOSOMALS2"/>
</dbReference>
<dbReference type="SUPFAM" id="SSF52313">
    <property type="entry name" value="Ribosomal protein S2"/>
    <property type="match status" value="1"/>
</dbReference>
<dbReference type="PROSITE" id="PS00962">
    <property type="entry name" value="RIBOSOMAL_S2_1"/>
    <property type="match status" value="1"/>
</dbReference>
<dbReference type="PROSITE" id="PS00963">
    <property type="entry name" value="RIBOSOMAL_S2_2"/>
    <property type="match status" value="1"/>
</dbReference>
<proteinExistence type="inferred from homology"/>
<feature type="chain" id="PRO_1000003876" description="Small ribosomal subunit protein uS2">
    <location>
        <begin position="1"/>
        <end position="301"/>
    </location>
</feature>
<feature type="region of interest" description="Disordered" evidence="2">
    <location>
        <begin position="282"/>
        <end position="301"/>
    </location>
</feature>
<feature type="compositionally biased region" description="Low complexity" evidence="2">
    <location>
        <begin position="289"/>
        <end position="301"/>
    </location>
</feature>
<sequence>MANITMKELLEAGVHFGHQTKRWNPKMKEYIFGERNGIYIIDLQKTLKMFKEASKFVSDVAAEGKLVLFVGTKRQAQDAIAEEAKRCGMFYINQRWLGGLLTNWVTVQKSVKRLKELDEMATDGRYELLPKKEVIKLERERKHLQANLAGIKNLNRLPDCLFVIDSNKEQIAVKEARKLGIPVVAVVDTNCDPSEVDYVIPGNDDALRAIRLFASKIADSVAEGSQLADKSMIESTNVSNAAEVIPQSYIGDDEEHGLAQPTEEAAPVEEEINMEEVLGKGVRKQPVSENENVEAAAAEQK</sequence>
<name>RS2_KORVE</name>
<gene>
    <name evidence="1" type="primary">rpsB</name>
    <name type="ordered locus">Acid345_0563</name>
</gene>
<evidence type="ECO:0000255" key="1">
    <source>
        <dbReference type="HAMAP-Rule" id="MF_00291"/>
    </source>
</evidence>
<evidence type="ECO:0000256" key="2">
    <source>
        <dbReference type="SAM" id="MobiDB-lite"/>
    </source>
</evidence>
<evidence type="ECO:0000305" key="3"/>
<reference key="1">
    <citation type="journal article" date="2009" name="Appl. Environ. Microbiol.">
        <title>Three genomes from the phylum Acidobacteria provide insight into the lifestyles of these microorganisms in soils.</title>
        <authorList>
            <person name="Ward N.L."/>
            <person name="Challacombe J.F."/>
            <person name="Janssen P.H."/>
            <person name="Henrissat B."/>
            <person name="Coutinho P.M."/>
            <person name="Wu M."/>
            <person name="Xie G."/>
            <person name="Haft D.H."/>
            <person name="Sait M."/>
            <person name="Badger J."/>
            <person name="Barabote R.D."/>
            <person name="Bradley B."/>
            <person name="Brettin T.S."/>
            <person name="Brinkac L.M."/>
            <person name="Bruce D."/>
            <person name="Creasy T."/>
            <person name="Daugherty S.C."/>
            <person name="Davidsen T.M."/>
            <person name="DeBoy R.T."/>
            <person name="Detter J.C."/>
            <person name="Dodson R.J."/>
            <person name="Durkin A.S."/>
            <person name="Ganapathy A."/>
            <person name="Gwinn-Giglio M."/>
            <person name="Han C.S."/>
            <person name="Khouri H."/>
            <person name="Kiss H."/>
            <person name="Kothari S.P."/>
            <person name="Madupu R."/>
            <person name="Nelson K.E."/>
            <person name="Nelson W.C."/>
            <person name="Paulsen I."/>
            <person name="Penn K."/>
            <person name="Ren Q."/>
            <person name="Rosovitz M.J."/>
            <person name="Selengut J.D."/>
            <person name="Shrivastava S."/>
            <person name="Sullivan S.A."/>
            <person name="Tapia R."/>
            <person name="Thompson L.S."/>
            <person name="Watkins K.L."/>
            <person name="Yang Q."/>
            <person name="Yu C."/>
            <person name="Zafar N."/>
            <person name="Zhou L."/>
            <person name="Kuske C.R."/>
        </authorList>
    </citation>
    <scope>NUCLEOTIDE SEQUENCE [LARGE SCALE GENOMIC DNA]</scope>
    <source>
        <strain>Ellin345</strain>
    </source>
</reference>
<protein>
    <recommendedName>
        <fullName evidence="1">Small ribosomal subunit protein uS2</fullName>
    </recommendedName>
    <alternativeName>
        <fullName evidence="3">30S ribosomal protein S2</fullName>
    </alternativeName>
</protein>
<keyword id="KW-1185">Reference proteome</keyword>
<keyword id="KW-0687">Ribonucleoprotein</keyword>
<keyword id="KW-0689">Ribosomal protein</keyword>